<dbReference type="EMBL" id="CP000264">
    <property type="protein sequence ID" value="ABD54673.1"/>
    <property type="molecule type" value="Genomic_DNA"/>
</dbReference>
<dbReference type="RefSeq" id="WP_011454878.1">
    <property type="nucleotide sequence ID" value="NC_007802.1"/>
</dbReference>
<dbReference type="SMR" id="Q28RI9"/>
<dbReference type="STRING" id="290400.Jann_1756"/>
<dbReference type="KEGG" id="jan:Jann_1756"/>
<dbReference type="eggNOG" id="COG0378">
    <property type="taxonomic scope" value="Bacteria"/>
</dbReference>
<dbReference type="HOGENOM" id="CLU_072144_1_0_5"/>
<dbReference type="OrthoDB" id="9802035at2"/>
<dbReference type="Proteomes" id="UP000008326">
    <property type="component" value="Chromosome"/>
</dbReference>
<dbReference type="GO" id="GO:0005737">
    <property type="term" value="C:cytoplasm"/>
    <property type="evidence" value="ECO:0007669"/>
    <property type="project" value="UniProtKB-SubCell"/>
</dbReference>
<dbReference type="GO" id="GO:0005525">
    <property type="term" value="F:GTP binding"/>
    <property type="evidence" value="ECO:0007669"/>
    <property type="project" value="UniProtKB-KW"/>
</dbReference>
<dbReference type="GO" id="GO:0003924">
    <property type="term" value="F:GTPase activity"/>
    <property type="evidence" value="ECO:0007669"/>
    <property type="project" value="InterPro"/>
</dbReference>
<dbReference type="GO" id="GO:0016151">
    <property type="term" value="F:nickel cation binding"/>
    <property type="evidence" value="ECO:0007669"/>
    <property type="project" value="UniProtKB-UniRule"/>
</dbReference>
<dbReference type="GO" id="GO:0043419">
    <property type="term" value="P:urea catabolic process"/>
    <property type="evidence" value="ECO:0007669"/>
    <property type="project" value="InterPro"/>
</dbReference>
<dbReference type="Gene3D" id="3.40.50.300">
    <property type="entry name" value="P-loop containing nucleotide triphosphate hydrolases"/>
    <property type="match status" value="1"/>
</dbReference>
<dbReference type="HAMAP" id="MF_01389">
    <property type="entry name" value="UreG"/>
    <property type="match status" value="1"/>
</dbReference>
<dbReference type="InterPro" id="IPR003495">
    <property type="entry name" value="CobW/HypB/UreG_nucleotide-bd"/>
</dbReference>
<dbReference type="InterPro" id="IPR027417">
    <property type="entry name" value="P-loop_NTPase"/>
</dbReference>
<dbReference type="InterPro" id="IPR004400">
    <property type="entry name" value="UreG"/>
</dbReference>
<dbReference type="NCBIfam" id="TIGR00101">
    <property type="entry name" value="ureG"/>
    <property type="match status" value="1"/>
</dbReference>
<dbReference type="PANTHER" id="PTHR31715">
    <property type="entry name" value="UREASE ACCESSORY PROTEIN G"/>
    <property type="match status" value="1"/>
</dbReference>
<dbReference type="PANTHER" id="PTHR31715:SF0">
    <property type="entry name" value="UREASE ACCESSORY PROTEIN G"/>
    <property type="match status" value="1"/>
</dbReference>
<dbReference type="Pfam" id="PF02492">
    <property type="entry name" value="cobW"/>
    <property type="match status" value="1"/>
</dbReference>
<dbReference type="PIRSF" id="PIRSF005624">
    <property type="entry name" value="Ni-bind_GTPase"/>
    <property type="match status" value="1"/>
</dbReference>
<dbReference type="SUPFAM" id="SSF52540">
    <property type="entry name" value="P-loop containing nucleoside triphosphate hydrolases"/>
    <property type="match status" value="1"/>
</dbReference>
<accession>Q28RI9</accession>
<evidence type="ECO:0000255" key="1">
    <source>
        <dbReference type="HAMAP-Rule" id="MF_01389"/>
    </source>
</evidence>
<sequence>MGSVNGPLRVGIGGPVGAGKTTLTAELARAMGQAYSVAVITNDIYTSEDAEFLLRAQVLPAERIRGVETGGCPHTAIREDASINLAAIAEFRTRLPDLDVIFIESGGDNLAATFSPELADLTIYVIDTAAGQDIPRKKGPGLTRSDLLIVNKVDLAPHVGVDVAQLEADTRAARGRRAYVMGSLREGRGVPEIVQFIKEVGGL</sequence>
<comment type="function">
    <text evidence="1">Facilitates the functional incorporation of the urease nickel metallocenter. This process requires GTP hydrolysis, probably effectuated by UreG.</text>
</comment>
<comment type="subunit">
    <text evidence="1">Homodimer. UreD, UreF and UreG form a complex that acts as a GTP-hydrolysis-dependent molecular chaperone, activating the urease apoprotein by helping to assemble the nickel containing metallocenter of UreC. The UreE protein probably delivers the nickel.</text>
</comment>
<comment type="subcellular location">
    <subcellularLocation>
        <location evidence="1">Cytoplasm</location>
    </subcellularLocation>
</comment>
<comment type="similarity">
    <text evidence="1">Belongs to the SIMIBI class G3E GTPase family. UreG subfamily.</text>
</comment>
<gene>
    <name evidence="1" type="primary">ureG</name>
    <name type="ordered locus">Jann_1756</name>
</gene>
<organism>
    <name type="scientific">Jannaschia sp. (strain CCS1)</name>
    <dbReference type="NCBI Taxonomy" id="290400"/>
    <lineage>
        <taxon>Bacteria</taxon>
        <taxon>Pseudomonadati</taxon>
        <taxon>Pseudomonadota</taxon>
        <taxon>Alphaproteobacteria</taxon>
        <taxon>Rhodobacterales</taxon>
        <taxon>Roseobacteraceae</taxon>
        <taxon>Jannaschia</taxon>
    </lineage>
</organism>
<keyword id="KW-0143">Chaperone</keyword>
<keyword id="KW-0963">Cytoplasm</keyword>
<keyword id="KW-0342">GTP-binding</keyword>
<keyword id="KW-0996">Nickel insertion</keyword>
<keyword id="KW-0547">Nucleotide-binding</keyword>
<keyword id="KW-1185">Reference proteome</keyword>
<name>UREG_JANSC</name>
<reference key="1">
    <citation type="submission" date="2006-02" db="EMBL/GenBank/DDBJ databases">
        <title>Complete sequence of chromosome of Jannaschia sp. CCS1.</title>
        <authorList>
            <consortium name="US DOE Joint Genome Institute"/>
            <person name="Copeland A."/>
            <person name="Lucas S."/>
            <person name="Lapidus A."/>
            <person name="Barry K."/>
            <person name="Detter J.C."/>
            <person name="Glavina del Rio T."/>
            <person name="Hammon N."/>
            <person name="Israni S."/>
            <person name="Pitluck S."/>
            <person name="Brettin T."/>
            <person name="Bruce D."/>
            <person name="Han C."/>
            <person name="Tapia R."/>
            <person name="Gilna P."/>
            <person name="Chertkov O."/>
            <person name="Saunders E."/>
            <person name="Schmutz J."/>
            <person name="Larimer F."/>
            <person name="Land M."/>
            <person name="Kyrpides N."/>
            <person name="Lykidis A."/>
            <person name="Moran M.A."/>
            <person name="Belas R."/>
            <person name="Ye W."/>
            <person name="Buchan A."/>
            <person name="Gonzalez J.M."/>
            <person name="Schell M.A."/>
            <person name="Richardson P."/>
        </authorList>
    </citation>
    <scope>NUCLEOTIDE SEQUENCE [LARGE SCALE GENOMIC DNA]</scope>
    <source>
        <strain>CCS1</strain>
    </source>
</reference>
<feature type="chain" id="PRO_0000347395" description="Urease accessory protein UreG">
    <location>
        <begin position="1"/>
        <end position="203"/>
    </location>
</feature>
<feature type="binding site" evidence="1">
    <location>
        <begin position="14"/>
        <end position="21"/>
    </location>
    <ligand>
        <name>GTP</name>
        <dbReference type="ChEBI" id="CHEBI:37565"/>
    </ligand>
</feature>
<proteinExistence type="inferred from homology"/>
<protein>
    <recommendedName>
        <fullName evidence="1">Urease accessory protein UreG</fullName>
    </recommendedName>
</protein>